<keyword id="KW-0227">DNA damage</keyword>
<keyword id="KW-0234">DNA repair</keyword>
<keyword id="KW-0235">DNA replication</keyword>
<keyword id="KW-0255">Endonuclease</keyword>
<keyword id="KW-0269">Exonuclease</keyword>
<keyword id="KW-0378">Hydrolase</keyword>
<keyword id="KW-0460">Magnesium</keyword>
<keyword id="KW-0479">Metal-binding</keyword>
<keyword id="KW-0496">Mitochondrion</keyword>
<keyword id="KW-0540">Nuclease</keyword>
<keyword id="KW-0539">Nucleus</keyword>
<keyword id="KW-0597">Phosphoprotein</keyword>
<keyword id="KW-1185">Reference proteome</keyword>
<gene>
    <name evidence="1" type="primary">FEN1</name>
    <name type="ORF">NAEGRDRAFT_44329</name>
</gene>
<feature type="chain" id="PRO_0000403610" description="Flap endonuclease 1">
    <location>
        <begin position="1"/>
        <end position="387"/>
    </location>
</feature>
<feature type="region of interest" description="N-domain">
    <location>
        <begin position="1"/>
        <end position="104"/>
    </location>
</feature>
<feature type="region of interest" description="I-domain">
    <location>
        <begin position="122"/>
        <end position="253"/>
    </location>
</feature>
<feature type="region of interest" description="Disordered" evidence="2">
    <location>
        <begin position="332"/>
        <end position="387"/>
    </location>
</feature>
<feature type="region of interest" description="Interaction with PCNA" evidence="1">
    <location>
        <begin position="338"/>
        <end position="346"/>
    </location>
</feature>
<feature type="compositionally biased region" description="Basic and acidic residues" evidence="2">
    <location>
        <begin position="361"/>
        <end position="371"/>
    </location>
</feature>
<feature type="compositionally biased region" description="Low complexity" evidence="2">
    <location>
        <begin position="378"/>
        <end position="387"/>
    </location>
</feature>
<feature type="binding site" evidence="1">
    <location>
        <position position="34"/>
    </location>
    <ligand>
        <name>Mg(2+)</name>
        <dbReference type="ChEBI" id="CHEBI:18420"/>
        <label>1</label>
    </ligand>
</feature>
<feature type="binding site" evidence="1">
    <location>
        <position position="70"/>
    </location>
    <ligand>
        <name>DNA</name>
        <dbReference type="ChEBI" id="CHEBI:16991"/>
    </ligand>
</feature>
<feature type="binding site" evidence="1">
    <location>
        <position position="86"/>
    </location>
    <ligand>
        <name>Mg(2+)</name>
        <dbReference type="ChEBI" id="CHEBI:18420"/>
        <label>1</label>
    </ligand>
</feature>
<feature type="binding site" evidence="1">
    <location>
        <position position="158"/>
    </location>
    <ligand>
        <name>DNA</name>
        <dbReference type="ChEBI" id="CHEBI:16991"/>
    </ligand>
</feature>
<feature type="binding site" evidence="1">
    <location>
        <position position="158"/>
    </location>
    <ligand>
        <name>Mg(2+)</name>
        <dbReference type="ChEBI" id="CHEBI:18420"/>
        <label>1</label>
    </ligand>
</feature>
<feature type="binding site" evidence="1">
    <location>
        <position position="160"/>
    </location>
    <ligand>
        <name>Mg(2+)</name>
        <dbReference type="ChEBI" id="CHEBI:18420"/>
        <label>1</label>
    </ligand>
</feature>
<feature type="binding site" evidence="1">
    <location>
        <position position="179"/>
    </location>
    <ligand>
        <name>Mg(2+)</name>
        <dbReference type="ChEBI" id="CHEBI:18420"/>
        <label>2</label>
    </ligand>
</feature>
<feature type="binding site" evidence="1">
    <location>
        <position position="181"/>
    </location>
    <ligand>
        <name>Mg(2+)</name>
        <dbReference type="ChEBI" id="CHEBI:18420"/>
        <label>2</label>
    </ligand>
</feature>
<feature type="binding site" evidence="1">
    <location>
        <position position="231"/>
    </location>
    <ligand>
        <name>DNA</name>
        <dbReference type="ChEBI" id="CHEBI:16991"/>
    </ligand>
</feature>
<feature type="binding site" evidence="1">
    <location>
        <position position="233"/>
    </location>
    <ligand>
        <name>DNA</name>
        <dbReference type="ChEBI" id="CHEBI:16991"/>
    </ligand>
</feature>
<feature type="binding site" evidence="1">
    <location>
        <position position="233"/>
    </location>
    <ligand>
        <name>Mg(2+)</name>
        <dbReference type="ChEBI" id="CHEBI:18420"/>
        <label>2</label>
    </ligand>
</feature>
<comment type="function">
    <text evidence="1">Structure-specific nuclease with 5'-flap endonuclease and 5'-3' exonuclease activities involved in DNA replication and repair. During DNA replication, cleaves the 5'-overhanging flap structure that is generated by displacement synthesis when DNA polymerase encounters the 5'-end of a downstream Okazaki fragment. It enters the flap from the 5'-end and then tracks to cleave the flap base, leaving a nick for ligation. Also involved in the long patch base excision repair (LP-BER) pathway, by cleaving within the apurinic/apyrimidinic (AP) site-terminated flap. Acts as a genome stabilization factor that prevents flaps from equilibrating into structures that lead to duplications and deletions. Also possesses 5'-3' exonuclease activity on nicked or gapped double-stranded DNA, and exhibits RNase H activity. Also involved in replication and repair of rDNA and in repairing mitochondrial DNA.</text>
</comment>
<comment type="cofactor">
    <cofactor evidence="1">
        <name>Mg(2+)</name>
        <dbReference type="ChEBI" id="CHEBI:18420"/>
    </cofactor>
    <text evidence="1">Binds 2 magnesium ions per subunit. They probably participate in the reaction catalyzed by the enzyme. May bind an additional third magnesium ion after substrate binding.</text>
</comment>
<comment type="subunit">
    <text evidence="1">Interacts with PCNA. Three molecules of FEN1 bind to one PCNA trimer with each molecule binding to one PCNA monomer. PCNA stimulates the nuclease activity without altering cleavage specificity.</text>
</comment>
<comment type="subcellular location">
    <subcellularLocation>
        <location evidence="1">Nucleus</location>
        <location evidence="1">Nucleolus</location>
    </subcellularLocation>
    <subcellularLocation>
        <location evidence="1">Nucleus</location>
        <location evidence="1">Nucleoplasm</location>
    </subcellularLocation>
    <subcellularLocation>
        <location evidence="1">Mitochondrion</location>
    </subcellularLocation>
    <text evidence="1">Resides mostly in the nucleoli and relocalizes to the nucleoplasm upon DNA damage.</text>
</comment>
<comment type="PTM">
    <text evidence="1">Phosphorylated. Phosphorylation upon DNA damage induces relocalization to the nuclear plasma.</text>
</comment>
<comment type="similarity">
    <text evidence="1">Belongs to the XPG/RAD2 endonuclease family. FEN1 subfamily.</text>
</comment>
<organism>
    <name type="scientific">Naegleria gruberi</name>
    <name type="common">Amoeba</name>
    <dbReference type="NCBI Taxonomy" id="5762"/>
    <lineage>
        <taxon>Eukaryota</taxon>
        <taxon>Discoba</taxon>
        <taxon>Heterolobosea</taxon>
        <taxon>Tetramitia</taxon>
        <taxon>Eutetramitia</taxon>
        <taxon>Vahlkampfiidae</taxon>
        <taxon>Naegleria</taxon>
    </lineage>
</organism>
<sequence length="387" mass="43528">MGIKGLSQLILDEAKDSVKEDQLKNYFGRKVAIDASMAMYQFLIALKNTGMDLTDKDGEVTNHLQGLLARTTKMLEYGIKPCYVFDGKPPQLKSGELEKRKERQKEAMEQFALAQEEGDEEKMVMWNKRTTRMTKEQSNDGKKLLRLMGVPVVEAPGEAEAQCAELCKGGLVYATATEDMDALTYATPVLARHLTFSEARKQPIQEFTFKQVIEGLGVTVDQFIDICILCGCDYTDSIKGIGPKKALAMIKKYGNIENLLKNIEGKHYQAPSEFPYEEVRNIFKNPDVTPSSELVDTMKWTEPDEEGLIEFLVKEKQFDEERVRGYIKRIKSSRGKPTQTRLDGFFTPVASSSTTKKKAPAKKDDKKSATDKKRKAADASTSSKKKK</sequence>
<dbReference type="EC" id="3.1.-.-" evidence="1"/>
<dbReference type="EMBL" id="GG738851">
    <property type="protein sequence ID" value="EFC48453.1"/>
    <property type="molecule type" value="Genomic_DNA"/>
</dbReference>
<dbReference type="SMR" id="D2V434"/>
<dbReference type="FunCoup" id="D2V434">
    <property type="interactions" value="670"/>
</dbReference>
<dbReference type="STRING" id="5762.D2V434"/>
<dbReference type="EnsemblProtists" id="EFC48453">
    <property type="protein sequence ID" value="EFC48453"/>
    <property type="gene ID" value="NAEGRDRAFT_44329"/>
</dbReference>
<dbReference type="VEuPathDB" id="AmoebaDB:NAEGRDRAFT_44329"/>
<dbReference type="eggNOG" id="KOG2519">
    <property type="taxonomic scope" value="Eukaryota"/>
</dbReference>
<dbReference type="InParanoid" id="D2V434"/>
<dbReference type="OMA" id="MGIPWVQ"/>
<dbReference type="OrthoDB" id="1937206at2759"/>
<dbReference type="Proteomes" id="UP000006671">
    <property type="component" value="Unassembled WGS sequence"/>
</dbReference>
<dbReference type="GO" id="GO:0005739">
    <property type="term" value="C:mitochondrion"/>
    <property type="evidence" value="ECO:0007669"/>
    <property type="project" value="UniProtKB-SubCell"/>
</dbReference>
<dbReference type="GO" id="GO:0005730">
    <property type="term" value="C:nucleolus"/>
    <property type="evidence" value="ECO:0007669"/>
    <property type="project" value="UniProtKB-SubCell"/>
</dbReference>
<dbReference type="GO" id="GO:0005654">
    <property type="term" value="C:nucleoplasm"/>
    <property type="evidence" value="ECO:0007669"/>
    <property type="project" value="UniProtKB-SubCell"/>
</dbReference>
<dbReference type="GO" id="GO:0008409">
    <property type="term" value="F:5'-3' exonuclease activity"/>
    <property type="evidence" value="ECO:0007669"/>
    <property type="project" value="UniProtKB-UniRule"/>
</dbReference>
<dbReference type="GO" id="GO:0017108">
    <property type="term" value="F:5'-flap endonuclease activity"/>
    <property type="evidence" value="ECO:0007669"/>
    <property type="project" value="UniProtKB-UniRule"/>
</dbReference>
<dbReference type="GO" id="GO:0003677">
    <property type="term" value="F:DNA binding"/>
    <property type="evidence" value="ECO:0007669"/>
    <property type="project" value="UniProtKB-UniRule"/>
</dbReference>
<dbReference type="GO" id="GO:0000287">
    <property type="term" value="F:magnesium ion binding"/>
    <property type="evidence" value="ECO:0007669"/>
    <property type="project" value="UniProtKB-UniRule"/>
</dbReference>
<dbReference type="GO" id="GO:0006284">
    <property type="term" value="P:base-excision repair"/>
    <property type="evidence" value="ECO:0007669"/>
    <property type="project" value="UniProtKB-UniRule"/>
</dbReference>
<dbReference type="GO" id="GO:0043137">
    <property type="term" value="P:DNA replication, removal of RNA primer"/>
    <property type="evidence" value="ECO:0007669"/>
    <property type="project" value="UniProtKB-UniRule"/>
</dbReference>
<dbReference type="CDD" id="cd09867">
    <property type="entry name" value="PIN_FEN1"/>
    <property type="match status" value="1"/>
</dbReference>
<dbReference type="FunFam" id="1.10.150.20:FF:000009">
    <property type="entry name" value="Flap endonuclease 1"/>
    <property type="match status" value="1"/>
</dbReference>
<dbReference type="FunFam" id="3.40.50.1010:FF:000016">
    <property type="entry name" value="Flap endonuclease 1"/>
    <property type="match status" value="1"/>
</dbReference>
<dbReference type="Gene3D" id="1.10.150.20">
    <property type="entry name" value="5' to 3' exonuclease, C-terminal subdomain"/>
    <property type="match status" value="1"/>
</dbReference>
<dbReference type="Gene3D" id="3.40.50.1010">
    <property type="entry name" value="5'-nuclease"/>
    <property type="match status" value="1"/>
</dbReference>
<dbReference type="HAMAP" id="MF_00614">
    <property type="entry name" value="Fen"/>
    <property type="match status" value="1"/>
</dbReference>
<dbReference type="InterPro" id="IPR002421">
    <property type="entry name" value="5-3_exonuclease"/>
</dbReference>
<dbReference type="InterPro" id="IPR036279">
    <property type="entry name" value="5-3_exonuclease_C_sf"/>
</dbReference>
<dbReference type="InterPro" id="IPR023426">
    <property type="entry name" value="Flap_endonuc"/>
</dbReference>
<dbReference type="InterPro" id="IPR008918">
    <property type="entry name" value="HhH2"/>
</dbReference>
<dbReference type="InterPro" id="IPR029060">
    <property type="entry name" value="PIN-like_dom_sf"/>
</dbReference>
<dbReference type="InterPro" id="IPR006086">
    <property type="entry name" value="XPG-I_dom"/>
</dbReference>
<dbReference type="InterPro" id="IPR006084">
    <property type="entry name" value="XPG/Rad2"/>
</dbReference>
<dbReference type="InterPro" id="IPR019974">
    <property type="entry name" value="XPG_CS"/>
</dbReference>
<dbReference type="InterPro" id="IPR006085">
    <property type="entry name" value="XPG_DNA_repair_N"/>
</dbReference>
<dbReference type="PANTHER" id="PTHR11081:SF9">
    <property type="entry name" value="FLAP ENDONUCLEASE 1"/>
    <property type="match status" value="1"/>
</dbReference>
<dbReference type="PANTHER" id="PTHR11081">
    <property type="entry name" value="FLAP ENDONUCLEASE FAMILY MEMBER"/>
    <property type="match status" value="1"/>
</dbReference>
<dbReference type="Pfam" id="PF00867">
    <property type="entry name" value="XPG_I"/>
    <property type="match status" value="1"/>
</dbReference>
<dbReference type="Pfam" id="PF00752">
    <property type="entry name" value="XPG_N"/>
    <property type="match status" value="1"/>
</dbReference>
<dbReference type="PRINTS" id="PR00853">
    <property type="entry name" value="XPGRADSUPER"/>
</dbReference>
<dbReference type="SMART" id="SM00475">
    <property type="entry name" value="53EXOc"/>
    <property type="match status" value="1"/>
</dbReference>
<dbReference type="SMART" id="SM00279">
    <property type="entry name" value="HhH2"/>
    <property type="match status" value="1"/>
</dbReference>
<dbReference type="SMART" id="SM00484">
    <property type="entry name" value="XPGI"/>
    <property type="match status" value="1"/>
</dbReference>
<dbReference type="SMART" id="SM00485">
    <property type="entry name" value="XPGN"/>
    <property type="match status" value="1"/>
</dbReference>
<dbReference type="SUPFAM" id="SSF47807">
    <property type="entry name" value="5' to 3' exonuclease, C-terminal subdomain"/>
    <property type="match status" value="1"/>
</dbReference>
<dbReference type="SUPFAM" id="SSF88723">
    <property type="entry name" value="PIN domain-like"/>
    <property type="match status" value="1"/>
</dbReference>
<dbReference type="PROSITE" id="PS00841">
    <property type="entry name" value="XPG_1"/>
    <property type="match status" value="1"/>
</dbReference>
<dbReference type="PROSITE" id="PS00842">
    <property type="entry name" value="XPG_2"/>
    <property type="match status" value="1"/>
</dbReference>
<proteinExistence type="inferred from homology"/>
<protein>
    <recommendedName>
        <fullName evidence="1">Flap endonuclease 1</fullName>
        <shortName evidence="1">FEN-1</shortName>
        <ecNumber evidence="1">3.1.-.-</ecNumber>
    </recommendedName>
    <alternativeName>
        <fullName evidence="1">Flap structure-specific endonuclease 1</fullName>
    </alternativeName>
</protein>
<reference key="1">
    <citation type="journal article" date="2010" name="Cell">
        <title>The genome of Naegleria gruberi illuminates early eukaryotic versatility.</title>
        <authorList>
            <person name="Fritz-Laylin L.K."/>
            <person name="Prochnik S.E."/>
            <person name="Ginger M.L."/>
            <person name="Dacks J.B."/>
            <person name="Carpenter M.L."/>
            <person name="Field M.C."/>
            <person name="Kuo A."/>
            <person name="Paredez A."/>
            <person name="Chapman J."/>
            <person name="Pham J."/>
            <person name="Shu S."/>
            <person name="Neupane R."/>
            <person name="Cipriano M."/>
            <person name="Mancuso J."/>
            <person name="Tu H."/>
            <person name="Salamov A."/>
            <person name="Lindquist E."/>
            <person name="Shapiro H."/>
            <person name="Lucas S."/>
            <person name="Grigoriev I.V."/>
            <person name="Cande W.Z."/>
            <person name="Fulton C."/>
            <person name="Rokhsar D.S."/>
            <person name="Dawson S.C."/>
        </authorList>
    </citation>
    <scope>NUCLEOTIDE SEQUENCE [LARGE SCALE GENOMIC DNA]</scope>
    <source>
        <strain>ATCC 30224 / NEG-M</strain>
    </source>
</reference>
<name>FEN1_NAEGR</name>
<accession>D2V434</accession>
<evidence type="ECO:0000255" key="1">
    <source>
        <dbReference type="HAMAP-Rule" id="MF_03140"/>
    </source>
</evidence>
<evidence type="ECO:0000256" key="2">
    <source>
        <dbReference type="SAM" id="MobiDB-lite"/>
    </source>
</evidence>